<proteinExistence type="inferred from homology"/>
<gene>
    <name evidence="1" type="primary">argH</name>
    <name type="ordered locus">lpp0557</name>
</gene>
<feature type="chain" id="PRO_0000240737" description="Argininosuccinate lyase">
    <location>
        <begin position="1"/>
        <end position="411"/>
    </location>
</feature>
<comment type="catalytic activity">
    <reaction evidence="1">
        <text>2-(N(omega)-L-arginino)succinate = fumarate + L-arginine</text>
        <dbReference type="Rhea" id="RHEA:24020"/>
        <dbReference type="ChEBI" id="CHEBI:29806"/>
        <dbReference type="ChEBI" id="CHEBI:32682"/>
        <dbReference type="ChEBI" id="CHEBI:57472"/>
        <dbReference type="EC" id="4.3.2.1"/>
    </reaction>
</comment>
<comment type="pathway">
    <text evidence="1">Amino-acid biosynthesis; L-arginine biosynthesis; L-arginine from L-ornithine and carbamoyl phosphate: step 3/3.</text>
</comment>
<comment type="subcellular location">
    <subcellularLocation>
        <location evidence="1">Cytoplasm</location>
    </subcellularLocation>
</comment>
<comment type="similarity">
    <text evidence="1">Belongs to the lyase 1 family. Argininosuccinate lyase subfamily.</text>
</comment>
<evidence type="ECO:0000255" key="1">
    <source>
        <dbReference type="HAMAP-Rule" id="MF_00006"/>
    </source>
</evidence>
<protein>
    <recommendedName>
        <fullName evidence="1">Argininosuccinate lyase</fullName>
        <shortName evidence="1">ASAL</shortName>
        <ecNumber evidence="1">4.3.2.1</ecNumber>
    </recommendedName>
    <alternativeName>
        <fullName evidence="1">Arginosuccinase</fullName>
    </alternativeName>
</protein>
<accession>Q5X7P8</accession>
<dbReference type="EC" id="4.3.2.1" evidence="1"/>
<dbReference type="EMBL" id="CR628336">
    <property type="protein sequence ID" value="CAH11705.1"/>
    <property type="molecule type" value="Genomic_DNA"/>
</dbReference>
<dbReference type="RefSeq" id="WP_011213124.1">
    <property type="nucleotide sequence ID" value="NC_006368.1"/>
</dbReference>
<dbReference type="SMR" id="Q5X7P8"/>
<dbReference type="KEGG" id="lpp:lpp0557"/>
<dbReference type="LegioList" id="lpp0557"/>
<dbReference type="HOGENOM" id="CLU_027272_2_0_6"/>
<dbReference type="UniPathway" id="UPA00068">
    <property type="reaction ID" value="UER00114"/>
</dbReference>
<dbReference type="GO" id="GO:0005829">
    <property type="term" value="C:cytosol"/>
    <property type="evidence" value="ECO:0007669"/>
    <property type="project" value="TreeGrafter"/>
</dbReference>
<dbReference type="GO" id="GO:0004056">
    <property type="term" value="F:argininosuccinate lyase activity"/>
    <property type="evidence" value="ECO:0007669"/>
    <property type="project" value="UniProtKB-UniRule"/>
</dbReference>
<dbReference type="GO" id="GO:0042450">
    <property type="term" value="P:arginine biosynthetic process via ornithine"/>
    <property type="evidence" value="ECO:0007669"/>
    <property type="project" value="InterPro"/>
</dbReference>
<dbReference type="GO" id="GO:0006526">
    <property type="term" value="P:L-arginine biosynthetic process"/>
    <property type="evidence" value="ECO:0007669"/>
    <property type="project" value="UniProtKB-UniRule"/>
</dbReference>
<dbReference type="CDD" id="cd01359">
    <property type="entry name" value="Argininosuccinate_lyase"/>
    <property type="match status" value="1"/>
</dbReference>
<dbReference type="FunFam" id="1.10.275.10:FF:000002">
    <property type="entry name" value="Argininosuccinate lyase"/>
    <property type="match status" value="1"/>
</dbReference>
<dbReference type="FunFam" id="1.20.200.10:FF:000015">
    <property type="entry name" value="argininosuccinate lyase isoform X2"/>
    <property type="match status" value="1"/>
</dbReference>
<dbReference type="Gene3D" id="1.10.40.30">
    <property type="entry name" value="Fumarase/aspartase (C-terminal domain)"/>
    <property type="match status" value="1"/>
</dbReference>
<dbReference type="Gene3D" id="1.20.200.10">
    <property type="entry name" value="Fumarase/aspartase (Central domain)"/>
    <property type="match status" value="1"/>
</dbReference>
<dbReference type="Gene3D" id="1.10.275.10">
    <property type="entry name" value="Fumarase/aspartase (N-terminal domain)"/>
    <property type="match status" value="1"/>
</dbReference>
<dbReference type="HAMAP" id="MF_00006">
    <property type="entry name" value="Arg_succ_lyase"/>
    <property type="match status" value="1"/>
</dbReference>
<dbReference type="InterPro" id="IPR029419">
    <property type="entry name" value="Arg_succ_lyase_C"/>
</dbReference>
<dbReference type="InterPro" id="IPR009049">
    <property type="entry name" value="Argininosuccinate_lyase"/>
</dbReference>
<dbReference type="InterPro" id="IPR024083">
    <property type="entry name" value="Fumarase/histidase_N"/>
</dbReference>
<dbReference type="InterPro" id="IPR020557">
    <property type="entry name" value="Fumarate_lyase_CS"/>
</dbReference>
<dbReference type="InterPro" id="IPR000362">
    <property type="entry name" value="Fumarate_lyase_fam"/>
</dbReference>
<dbReference type="InterPro" id="IPR022761">
    <property type="entry name" value="Fumarate_lyase_N"/>
</dbReference>
<dbReference type="InterPro" id="IPR008948">
    <property type="entry name" value="L-Aspartase-like"/>
</dbReference>
<dbReference type="NCBIfam" id="TIGR00838">
    <property type="entry name" value="argH"/>
    <property type="match status" value="1"/>
</dbReference>
<dbReference type="PANTHER" id="PTHR43814">
    <property type="entry name" value="ARGININOSUCCINATE LYASE"/>
    <property type="match status" value="1"/>
</dbReference>
<dbReference type="PANTHER" id="PTHR43814:SF1">
    <property type="entry name" value="ARGININOSUCCINATE LYASE"/>
    <property type="match status" value="1"/>
</dbReference>
<dbReference type="Pfam" id="PF14698">
    <property type="entry name" value="ASL_C2"/>
    <property type="match status" value="1"/>
</dbReference>
<dbReference type="Pfam" id="PF00206">
    <property type="entry name" value="Lyase_1"/>
    <property type="match status" value="1"/>
</dbReference>
<dbReference type="PRINTS" id="PR00145">
    <property type="entry name" value="ARGSUCLYASE"/>
</dbReference>
<dbReference type="PRINTS" id="PR00149">
    <property type="entry name" value="FUMRATELYASE"/>
</dbReference>
<dbReference type="SUPFAM" id="SSF48557">
    <property type="entry name" value="L-aspartase-like"/>
    <property type="match status" value="1"/>
</dbReference>
<dbReference type="PROSITE" id="PS00163">
    <property type="entry name" value="FUMARATE_LYASES"/>
    <property type="match status" value="1"/>
</dbReference>
<organism>
    <name type="scientific">Legionella pneumophila (strain Paris)</name>
    <dbReference type="NCBI Taxonomy" id="297246"/>
    <lineage>
        <taxon>Bacteria</taxon>
        <taxon>Pseudomonadati</taxon>
        <taxon>Pseudomonadota</taxon>
        <taxon>Gammaproteobacteria</taxon>
        <taxon>Legionellales</taxon>
        <taxon>Legionellaceae</taxon>
        <taxon>Legionella</taxon>
    </lineage>
</organism>
<sequence length="411" mass="46245">MTNKTWGGRFKKSLDSSVNQFNASLSFDHVLFDQDINGSQVHVKQLAKQKILTEAECQGIYSALEEIRTEIKQGQYSFNERDEEDIHMFIEQLLIQKIGDLGKKLHTGRSRNDQVALDLRLYTRDKGCLINELLTRLIDCLDDLTSKHQQDLMPGYTHLQQAQPVALGAYFNAYQCMFGRDKSRLDDWFKRMNYSPLGAGALAGSTLPLDREWVAESLGFAGIIPNTLDAVSDRDFVIELCSVAAMIMMHLSRLCEDLILWSTQEFNFVILDDAFATGSSLMPNKKNPDVPELIRGKSGRVYGHLMAILTVMKGLPLAYNKDMQEDKEGLFDTINTIIACLQMITPFLQSLTFNTLLMKTKAQSGYLDATAILESLVMKGMPFRNAHHQVGAWIAEAIEKQCSLNELLKGG</sequence>
<name>ARLY_LEGPA</name>
<keyword id="KW-0028">Amino-acid biosynthesis</keyword>
<keyword id="KW-0055">Arginine biosynthesis</keyword>
<keyword id="KW-0963">Cytoplasm</keyword>
<keyword id="KW-0456">Lyase</keyword>
<reference key="1">
    <citation type="journal article" date="2004" name="Nat. Genet.">
        <title>Evidence in the Legionella pneumophila genome for exploitation of host cell functions and high genome plasticity.</title>
        <authorList>
            <person name="Cazalet C."/>
            <person name="Rusniok C."/>
            <person name="Brueggemann H."/>
            <person name="Zidane N."/>
            <person name="Magnier A."/>
            <person name="Ma L."/>
            <person name="Tichit M."/>
            <person name="Jarraud S."/>
            <person name="Bouchier C."/>
            <person name="Vandenesch F."/>
            <person name="Kunst F."/>
            <person name="Etienne J."/>
            <person name="Glaser P."/>
            <person name="Buchrieser C."/>
        </authorList>
    </citation>
    <scope>NUCLEOTIDE SEQUENCE [LARGE SCALE GENOMIC DNA]</scope>
    <source>
        <strain>Paris</strain>
    </source>
</reference>